<gene>
    <name evidence="1" type="primary">purH</name>
    <name type="ordered locus">SeHA_C4507</name>
</gene>
<evidence type="ECO:0000255" key="1">
    <source>
        <dbReference type="HAMAP-Rule" id="MF_00139"/>
    </source>
</evidence>
<evidence type="ECO:0000255" key="2">
    <source>
        <dbReference type="PROSITE-ProRule" id="PRU01202"/>
    </source>
</evidence>
<feature type="chain" id="PRO_1000096092" description="Bifunctional purine biosynthesis protein PurH">
    <location>
        <begin position="1"/>
        <end position="529"/>
    </location>
</feature>
<feature type="domain" description="MGS-like" evidence="2">
    <location>
        <begin position="1"/>
        <end position="148"/>
    </location>
</feature>
<reference key="1">
    <citation type="journal article" date="2011" name="J. Bacteriol.">
        <title>Comparative genomics of 28 Salmonella enterica isolates: evidence for CRISPR-mediated adaptive sublineage evolution.</title>
        <authorList>
            <person name="Fricke W.F."/>
            <person name="Mammel M.K."/>
            <person name="McDermott P.F."/>
            <person name="Tartera C."/>
            <person name="White D.G."/>
            <person name="Leclerc J.E."/>
            <person name="Ravel J."/>
            <person name="Cebula T.A."/>
        </authorList>
    </citation>
    <scope>NUCLEOTIDE SEQUENCE [LARGE SCALE GENOMIC DNA]</scope>
    <source>
        <strain>SL476</strain>
    </source>
</reference>
<name>PUR9_SALHS</name>
<dbReference type="EC" id="2.1.2.3" evidence="1"/>
<dbReference type="EC" id="3.5.4.10" evidence="1"/>
<dbReference type="EMBL" id="CP001120">
    <property type="protein sequence ID" value="ACF67920.1"/>
    <property type="molecule type" value="Genomic_DNA"/>
</dbReference>
<dbReference type="RefSeq" id="WP_001187495.1">
    <property type="nucleotide sequence ID" value="NC_011083.1"/>
</dbReference>
<dbReference type="SMR" id="B4TDF3"/>
<dbReference type="KEGG" id="seh:SeHA_C4507"/>
<dbReference type="HOGENOM" id="CLU_016316_5_2_6"/>
<dbReference type="UniPathway" id="UPA00074">
    <property type="reaction ID" value="UER00133"/>
</dbReference>
<dbReference type="UniPathway" id="UPA00074">
    <property type="reaction ID" value="UER00135"/>
</dbReference>
<dbReference type="Proteomes" id="UP000001866">
    <property type="component" value="Chromosome"/>
</dbReference>
<dbReference type="GO" id="GO:0005829">
    <property type="term" value="C:cytosol"/>
    <property type="evidence" value="ECO:0007669"/>
    <property type="project" value="TreeGrafter"/>
</dbReference>
<dbReference type="GO" id="GO:0003937">
    <property type="term" value="F:IMP cyclohydrolase activity"/>
    <property type="evidence" value="ECO:0007669"/>
    <property type="project" value="UniProtKB-UniRule"/>
</dbReference>
<dbReference type="GO" id="GO:0004643">
    <property type="term" value="F:phosphoribosylaminoimidazolecarboxamide formyltransferase activity"/>
    <property type="evidence" value="ECO:0007669"/>
    <property type="project" value="UniProtKB-UniRule"/>
</dbReference>
<dbReference type="GO" id="GO:0006189">
    <property type="term" value="P:'de novo' IMP biosynthetic process"/>
    <property type="evidence" value="ECO:0007669"/>
    <property type="project" value="UniProtKB-UniRule"/>
</dbReference>
<dbReference type="CDD" id="cd01421">
    <property type="entry name" value="IMPCH"/>
    <property type="match status" value="1"/>
</dbReference>
<dbReference type="FunFam" id="3.40.140.20:FF:000001">
    <property type="entry name" value="Bifunctional purine biosynthesis protein PurH"/>
    <property type="match status" value="1"/>
</dbReference>
<dbReference type="FunFam" id="3.40.140.20:FF:000002">
    <property type="entry name" value="Bifunctional purine biosynthesis protein PurH"/>
    <property type="match status" value="1"/>
</dbReference>
<dbReference type="FunFam" id="3.40.50.1380:FF:000001">
    <property type="entry name" value="Bifunctional purine biosynthesis protein PurH"/>
    <property type="match status" value="1"/>
</dbReference>
<dbReference type="Gene3D" id="3.40.140.20">
    <property type="match status" value="2"/>
</dbReference>
<dbReference type="Gene3D" id="3.40.50.1380">
    <property type="entry name" value="Methylglyoxal synthase-like domain"/>
    <property type="match status" value="1"/>
</dbReference>
<dbReference type="HAMAP" id="MF_00139">
    <property type="entry name" value="PurH"/>
    <property type="match status" value="1"/>
</dbReference>
<dbReference type="InterPro" id="IPR024051">
    <property type="entry name" value="AICAR_Tfase_dup_dom_sf"/>
</dbReference>
<dbReference type="InterPro" id="IPR016193">
    <property type="entry name" value="Cytidine_deaminase-like"/>
</dbReference>
<dbReference type="InterPro" id="IPR011607">
    <property type="entry name" value="MGS-like_dom"/>
</dbReference>
<dbReference type="InterPro" id="IPR036914">
    <property type="entry name" value="MGS-like_dom_sf"/>
</dbReference>
<dbReference type="InterPro" id="IPR002695">
    <property type="entry name" value="PurH-like"/>
</dbReference>
<dbReference type="NCBIfam" id="NF002049">
    <property type="entry name" value="PRK00881.1"/>
    <property type="match status" value="1"/>
</dbReference>
<dbReference type="NCBIfam" id="TIGR00355">
    <property type="entry name" value="purH"/>
    <property type="match status" value="1"/>
</dbReference>
<dbReference type="PANTHER" id="PTHR11692:SF0">
    <property type="entry name" value="BIFUNCTIONAL PURINE BIOSYNTHESIS PROTEIN ATIC"/>
    <property type="match status" value="1"/>
</dbReference>
<dbReference type="PANTHER" id="PTHR11692">
    <property type="entry name" value="BIFUNCTIONAL PURINE BIOSYNTHESIS PROTEIN PURH"/>
    <property type="match status" value="1"/>
</dbReference>
<dbReference type="Pfam" id="PF01808">
    <property type="entry name" value="AICARFT_IMPCHas"/>
    <property type="match status" value="1"/>
</dbReference>
<dbReference type="Pfam" id="PF02142">
    <property type="entry name" value="MGS"/>
    <property type="match status" value="1"/>
</dbReference>
<dbReference type="PIRSF" id="PIRSF000414">
    <property type="entry name" value="AICARFT_IMPCHas"/>
    <property type="match status" value="1"/>
</dbReference>
<dbReference type="SMART" id="SM00798">
    <property type="entry name" value="AICARFT_IMPCHas"/>
    <property type="match status" value="1"/>
</dbReference>
<dbReference type="SMART" id="SM00851">
    <property type="entry name" value="MGS"/>
    <property type="match status" value="1"/>
</dbReference>
<dbReference type="SUPFAM" id="SSF53927">
    <property type="entry name" value="Cytidine deaminase-like"/>
    <property type="match status" value="1"/>
</dbReference>
<dbReference type="SUPFAM" id="SSF52335">
    <property type="entry name" value="Methylglyoxal synthase-like"/>
    <property type="match status" value="1"/>
</dbReference>
<dbReference type="PROSITE" id="PS51855">
    <property type="entry name" value="MGS"/>
    <property type="match status" value="1"/>
</dbReference>
<sequence>MQQRRPVRRALLSVSDKAGIIEFAQALSARGVELLSTGGTARLLAEKGLPVTEVSDYTGFPEMMDGRVKTLHPKIHGGILGRRGQDDAIMEQHHIAPIDMVVVNLYPFAETVAREGCSLEDAVENIDIGGPTMVRSAAKNHKDVAIVVKSSDYDAIIKEMDANEGSLTLDTRFDLAIKAFEHTAAYDSMIANYFGSMVPAYHGESKEAAGRFPRTLNLNFIKKQDMRYGENSHQQAAFYIEENVKEASVATAQQVQGKALSYNNIADTDAALECVKEFNEPACVIVKHANPCGVAVSTTILDAYDRAYKTDPTSAFGGIIAFNRELDAETAQAIISRQFVEVIIAPSATEEALKITAAKQNVRVLTCGQWAQRVPGLDFKRVNGGLLVQDRDLGMVSEAELRVVSKRQPTEQELRDALFCWKVAKFVKSNAIVYAKENMTIGIGAGQMSRVYSAKIAGIKAADEGLEVKGSAMASDAFFPFRDGIDAAAAVGVSCVIQPGGSIRDDEVIAAADEHGIAMIFTDMRHFRH</sequence>
<accession>B4TDF3</accession>
<organism>
    <name type="scientific">Salmonella heidelberg (strain SL476)</name>
    <dbReference type="NCBI Taxonomy" id="454169"/>
    <lineage>
        <taxon>Bacteria</taxon>
        <taxon>Pseudomonadati</taxon>
        <taxon>Pseudomonadota</taxon>
        <taxon>Gammaproteobacteria</taxon>
        <taxon>Enterobacterales</taxon>
        <taxon>Enterobacteriaceae</taxon>
        <taxon>Salmonella</taxon>
    </lineage>
</organism>
<comment type="catalytic activity">
    <reaction evidence="1">
        <text>(6R)-10-formyltetrahydrofolate + 5-amino-1-(5-phospho-beta-D-ribosyl)imidazole-4-carboxamide = 5-formamido-1-(5-phospho-D-ribosyl)imidazole-4-carboxamide + (6S)-5,6,7,8-tetrahydrofolate</text>
        <dbReference type="Rhea" id="RHEA:22192"/>
        <dbReference type="ChEBI" id="CHEBI:57453"/>
        <dbReference type="ChEBI" id="CHEBI:58467"/>
        <dbReference type="ChEBI" id="CHEBI:58475"/>
        <dbReference type="ChEBI" id="CHEBI:195366"/>
        <dbReference type="EC" id="2.1.2.3"/>
    </reaction>
</comment>
<comment type="catalytic activity">
    <reaction evidence="1">
        <text>IMP + H2O = 5-formamido-1-(5-phospho-D-ribosyl)imidazole-4-carboxamide</text>
        <dbReference type="Rhea" id="RHEA:18445"/>
        <dbReference type="ChEBI" id="CHEBI:15377"/>
        <dbReference type="ChEBI" id="CHEBI:58053"/>
        <dbReference type="ChEBI" id="CHEBI:58467"/>
        <dbReference type="EC" id="3.5.4.10"/>
    </reaction>
</comment>
<comment type="pathway">
    <text evidence="1">Purine metabolism; IMP biosynthesis via de novo pathway; 5-formamido-1-(5-phospho-D-ribosyl)imidazole-4-carboxamide from 5-amino-1-(5-phospho-D-ribosyl)imidazole-4-carboxamide (10-formyl THF route): step 1/1.</text>
</comment>
<comment type="pathway">
    <text evidence="1">Purine metabolism; IMP biosynthesis via de novo pathway; IMP from 5-formamido-1-(5-phospho-D-ribosyl)imidazole-4-carboxamide: step 1/1.</text>
</comment>
<comment type="domain">
    <text evidence="1">The IMP cyclohydrolase activity resides in the N-terminal region.</text>
</comment>
<comment type="similarity">
    <text evidence="1">Belongs to the PurH family.</text>
</comment>
<protein>
    <recommendedName>
        <fullName evidence="1">Bifunctional purine biosynthesis protein PurH</fullName>
    </recommendedName>
    <domain>
        <recommendedName>
            <fullName evidence="1">Phosphoribosylaminoimidazolecarboxamide formyltransferase</fullName>
            <ecNumber evidence="1">2.1.2.3</ecNumber>
        </recommendedName>
        <alternativeName>
            <fullName evidence="1">AICAR transformylase</fullName>
        </alternativeName>
    </domain>
    <domain>
        <recommendedName>
            <fullName evidence="1">IMP cyclohydrolase</fullName>
            <ecNumber evidence="1">3.5.4.10</ecNumber>
        </recommendedName>
        <alternativeName>
            <fullName evidence="1">ATIC</fullName>
        </alternativeName>
        <alternativeName>
            <fullName evidence="1">IMP synthase</fullName>
        </alternativeName>
        <alternativeName>
            <fullName evidence="1">Inosinicase</fullName>
        </alternativeName>
    </domain>
</protein>
<proteinExistence type="inferred from homology"/>
<keyword id="KW-0378">Hydrolase</keyword>
<keyword id="KW-0511">Multifunctional enzyme</keyword>
<keyword id="KW-0658">Purine biosynthesis</keyword>
<keyword id="KW-0808">Transferase</keyword>